<keyword id="KW-0002">3D-structure</keyword>
<keyword id="KW-0025">Alternative splicing</keyword>
<keyword id="KW-0256">Endoplasmic reticulum</keyword>
<keyword id="KW-0325">Glycoprotein</keyword>
<keyword id="KW-0444">Lipid biosynthesis</keyword>
<keyword id="KW-0443">Lipid metabolism</keyword>
<keyword id="KW-0472">Membrane</keyword>
<keyword id="KW-0597">Phosphoprotein</keyword>
<keyword id="KW-1185">Reference proteome</keyword>
<keyword id="KW-0746">Sphingolipid metabolism</keyword>
<keyword id="KW-0808">Transferase</keyword>
<keyword id="KW-0812">Transmembrane</keyword>
<keyword id="KW-1133">Transmembrane helix</keyword>
<gene>
    <name evidence="20" type="primary">Cers5</name>
    <name evidence="16" type="synonym">Lass5</name>
    <name evidence="14" type="synonym">Trh4</name>
</gene>
<organism>
    <name type="scientific">Mus musculus</name>
    <name type="common">Mouse</name>
    <dbReference type="NCBI Taxonomy" id="10090"/>
    <lineage>
        <taxon>Eukaryota</taxon>
        <taxon>Metazoa</taxon>
        <taxon>Chordata</taxon>
        <taxon>Craniata</taxon>
        <taxon>Vertebrata</taxon>
        <taxon>Euteleostomi</taxon>
        <taxon>Mammalia</taxon>
        <taxon>Eutheria</taxon>
        <taxon>Euarchontoglires</taxon>
        <taxon>Glires</taxon>
        <taxon>Rodentia</taxon>
        <taxon>Myomorpha</taxon>
        <taxon>Muroidea</taxon>
        <taxon>Muridae</taxon>
        <taxon>Murinae</taxon>
        <taxon>Mus</taxon>
        <taxon>Mus</taxon>
    </lineage>
</organism>
<dbReference type="EC" id="2.3.1.291" evidence="5 6 7 10"/>
<dbReference type="EC" id="2.3.1.24" evidence="5"/>
<dbReference type="EMBL" id="AY029533">
    <property type="protein sequence ID" value="AAK40301.1"/>
    <property type="molecule type" value="mRNA"/>
</dbReference>
<dbReference type="EMBL" id="AK010241">
    <property type="protein sequence ID" value="BAB26792.1"/>
    <property type="molecule type" value="mRNA"/>
</dbReference>
<dbReference type="EMBL" id="AK075694">
    <property type="protein sequence ID" value="BAC35894.1"/>
    <property type="molecule type" value="mRNA"/>
</dbReference>
<dbReference type="EMBL" id="AK145589">
    <property type="protein sequence ID" value="BAE26527.1"/>
    <property type="molecule type" value="mRNA"/>
</dbReference>
<dbReference type="EMBL" id="AK145762">
    <property type="protein sequence ID" value="BAE26634.1"/>
    <property type="molecule type" value="mRNA"/>
</dbReference>
<dbReference type="EMBL" id="BC010670">
    <property type="protein sequence ID" value="AAH10670.1"/>
    <property type="molecule type" value="mRNA"/>
</dbReference>
<dbReference type="EMBL" id="BC043059">
    <property type="protein sequence ID" value="AAH43059.1"/>
    <property type="molecule type" value="mRNA"/>
</dbReference>
<dbReference type="EMBL" id="BC046797">
    <property type="protein sequence ID" value="AAH46797.1"/>
    <property type="molecule type" value="mRNA"/>
</dbReference>
<dbReference type="CCDS" id="CCDS27830.1">
    <molecule id="Q9D6K9-1"/>
</dbReference>
<dbReference type="RefSeq" id="NP_082291.1">
    <molecule id="Q9D6K9-1"/>
    <property type="nucleotide sequence ID" value="NM_028015.2"/>
</dbReference>
<dbReference type="PDB" id="2CQX">
    <property type="method" value="NMR"/>
    <property type="chains" value="A=77-135"/>
</dbReference>
<dbReference type="PDB" id="5E8N">
    <property type="method" value="X-ray"/>
    <property type="resolution" value="2.25 A"/>
    <property type="chains" value="C/F/I/L=379-387"/>
</dbReference>
<dbReference type="PDB" id="5E8O">
    <property type="method" value="X-ray"/>
    <property type="resolution" value="1.98 A"/>
    <property type="chains" value="C/F=379-387"/>
</dbReference>
<dbReference type="PDB" id="5E8P">
    <property type="method" value="X-ray"/>
    <property type="resolution" value="2.00 A"/>
    <property type="chains" value="C/F=379-387"/>
</dbReference>
<dbReference type="PDBsum" id="2CQX"/>
<dbReference type="PDBsum" id="5E8N"/>
<dbReference type="PDBsum" id="5E8O"/>
<dbReference type="PDBsum" id="5E8P"/>
<dbReference type="SMR" id="Q9D6K9"/>
<dbReference type="BioGRID" id="215049">
    <property type="interactions" value="7"/>
</dbReference>
<dbReference type="FunCoup" id="Q9D6K9">
    <property type="interactions" value="3879"/>
</dbReference>
<dbReference type="IntAct" id="Q9D6K9">
    <property type="interactions" value="3"/>
</dbReference>
<dbReference type="STRING" id="10090.ENSMUSP00000023762"/>
<dbReference type="BindingDB" id="Q9D6K9"/>
<dbReference type="ChEMBL" id="CHEMBL5291555"/>
<dbReference type="SwissLipids" id="SLP:000000118"/>
<dbReference type="GlyCosmos" id="Q9D6K9">
    <property type="glycosylation" value="1 site, No reported glycans"/>
</dbReference>
<dbReference type="GlyGen" id="Q9D6K9">
    <property type="glycosylation" value="1 site"/>
</dbReference>
<dbReference type="iPTMnet" id="Q9D6K9"/>
<dbReference type="PhosphoSitePlus" id="Q9D6K9"/>
<dbReference type="SwissPalm" id="Q9D6K9"/>
<dbReference type="PaxDb" id="10090-ENSMUSP00000023762"/>
<dbReference type="PeptideAtlas" id="Q9D6K9"/>
<dbReference type="ProteomicsDB" id="281590">
    <molecule id="Q9D6K9-1"/>
</dbReference>
<dbReference type="ProteomicsDB" id="281591">
    <molecule id="Q9D6K9-2"/>
</dbReference>
<dbReference type="Pumba" id="Q9D6K9"/>
<dbReference type="Antibodypedia" id="14183">
    <property type="antibodies" value="212 antibodies from 30 providers"/>
</dbReference>
<dbReference type="DNASU" id="71949"/>
<dbReference type="Ensembl" id="ENSMUST00000023762.13">
    <molecule id="Q9D6K9-1"/>
    <property type="protein sequence ID" value="ENSMUSP00000023762.7"/>
    <property type="gene ID" value="ENSMUSG00000023021.16"/>
</dbReference>
<dbReference type="Ensembl" id="ENSMUST00000109035.11">
    <molecule id="Q9D6K9-2"/>
    <property type="protein sequence ID" value="ENSMUSP00000104663.5"/>
    <property type="gene ID" value="ENSMUSG00000023021.16"/>
</dbReference>
<dbReference type="GeneID" id="71949"/>
<dbReference type="KEGG" id="mmu:71949"/>
<dbReference type="UCSC" id="uc007xqf.1">
    <molecule id="Q9D6K9-1"/>
    <property type="organism name" value="mouse"/>
</dbReference>
<dbReference type="UCSC" id="uc007xqg.1">
    <molecule id="Q9D6K9-2"/>
    <property type="organism name" value="mouse"/>
</dbReference>
<dbReference type="AGR" id="MGI:1919199"/>
<dbReference type="CTD" id="91012"/>
<dbReference type="MGI" id="MGI:1919199">
    <property type="gene designation" value="Cers5"/>
</dbReference>
<dbReference type="VEuPathDB" id="HostDB:ENSMUSG00000023021"/>
<dbReference type="eggNOG" id="KOG1607">
    <property type="taxonomic scope" value="Eukaryota"/>
</dbReference>
<dbReference type="GeneTree" id="ENSGT01030000234515"/>
<dbReference type="HOGENOM" id="CLU_028277_1_1_1"/>
<dbReference type="InParanoid" id="Q9D6K9"/>
<dbReference type="OMA" id="FTESTWR"/>
<dbReference type="OrthoDB" id="537032at2759"/>
<dbReference type="PhylomeDB" id="Q9D6K9"/>
<dbReference type="TreeFam" id="TF314319"/>
<dbReference type="BRENDA" id="2.3.1.24">
    <property type="organism ID" value="3474"/>
</dbReference>
<dbReference type="BRENDA" id="2.3.1.291">
    <property type="organism ID" value="3474"/>
</dbReference>
<dbReference type="Reactome" id="R-MMU-1660661">
    <property type="pathway name" value="Sphingolipid de novo biosynthesis"/>
</dbReference>
<dbReference type="UniPathway" id="UPA00222"/>
<dbReference type="BioGRID-ORCS" id="71949">
    <property type="hits" value="8 hits in 80 CRISPR screens"/>
</dbReference>
<dbReference type="ChiTaRS" id="Cers5">
    <property type="organism name" value="mouse"/>
</dbReference>
<dbReference type="EvolutionaryTrace" id="Q9D6K9"/>
<dbReference type="PRO" id="PR:Q9D6K9"/>
<dbReference type="Proteomes" id="UP000000589">
    <property type="component" value="Chromosome 15"/>
</dbReference>
<dbReference type="RNAct" id="Q9D6K9">
    <property type="molecule type" value="protein"/>
</dbReference>
<dbReference type="Bgee" id="ENSMUSG00000023021">
    <property type="expression patterns" value="Expressed in tail skin and 264 other cell types or tissues"/>
</dbReference>
<dbReference type="ExpressionAtlas" id="Q9D6K9">
    <property type="expression patterns" value="baseline and differential"/>
</dbReference>
<dbReference type="GO" id="GO:0005783">
    <property type="term" value="C:endoplasmic reticulum"/>
    <property type="evidence" value="ECO:0000314"/>
    <property type="project" value="MGI"/>
</dbReference>
<dbReference type="GO" id="GO:0005789">
    <property type="term" value="C:endoplasmic reticulum membrane"/>
    <property type="evidence" value="ECO:0007669"/>
    <property type="project" value="UniProtKB-SubCell"/>
</dbReference>
<dbReference type="GO" id="GO:0003677">
    <property type="term" value="F:DNA binding"/>
    <property type="evidence" value="ECO:0007669"/>
    <property type="project" value="InterPro"/>
</dbReference>
<dbReference type="GO" id="GO:0050291">
    <property type="term" value="F:sphingosine N-acyltransferase activity"/>
    <property type="evidence" value="ECO:0000314"/>
    <property type="project" value="UniProtKB"/>
</dbReference>
<dbReference type="GO" id="GO:0046513">
    <property type="term" value="P:ceramide biosynthetic process"/>
    <property type="evidence" value="ECO:0000314"/>
    <property type="project" value="UniProtKB"/>
</dbReference>
<dbReference type="GO" id="GO:0030148">
    <property type="term" value="P:sphingolipid biosynthetic process"/>
    <property type="evidence" value="ECO:0000314"/>
    <property type="project" value="MGI"/>
</dbReference>
<dbReference type="CDD" id="cd00086">
    <property type="entry name" value="homeodomain"/>
    <property type="match status" value="1"/>
</dbReference>
<dbReference type="FunFam" id="1.10.10.60:FF:000020">
    <property type="entry name" value="Ceramide synthase 5"/>
    <property type="match status" value="1"/>
</dbReference>
<dbReference type="Gene3D" id="1.10.10.60">
    <property type="entry name" value="Homeodomain-like"/>
    <property type="match status" value="1"/>
</dbReference>
<dbReference type="InterPro" id="IPR001356">
    <property type="entry name" value="HD"/>
</dbReference>
<dbReference type="InterPro" id="IPR009057">
    <property type="entry name" value="Homeodomain-like_sf"/>
</dbReference>
<dbReference type="InterPro" id="IPR016439">
    <property type="entry name" value="Lag1/Lac1-like"/>
</dbReference>
<dbReference type="InterPro" id="IPR006634">
    <property type="entry name" value="TLC-dom"/>
</dbReference>
<dbReference type="PANTHER" id="PTHR12560:SF8">
    <property type="entry name" value="CERAMIDE SYNTHASE 5"/>
    <property type="match status" value="1"/>
</dbReference>
<dbReference type="PANTHER" id="PTHR12560">
    <property type="entry name" value="LONGEVITY ASSURANCE FACTOR 1 LAG1"/>
    <property type="match status" value="1"/>
</dbReference>
<dbReference type="Pfam" id="PF00046">
    <property type="entry name" value="Homeodomain"/>
    <property type="match status" value="1"/>
</dbReference>
<dbReference type="Pfam" id="PF03798">
    <property type="entry name" value="TRAM_LAG1_CLN8"/>
    <property type="match status" value="1"/>
</dbReference>
<dbReference type="PIRSF" id="PIRSF005225">
    <property type="entry name" value="LAG1_LAC1"/>
    <property type="match status" value="1"/>
</dbReference>
<dbReference type="SMART" id="SM00724">
    <property type="entry name" value="TLC"/>
    <property type="match status" value="1"/>
</dbReference>
<dbReference type="SUPFAM" id="SSF46689">
    <property type="entry name" value="Homeodomain-like"/>
    <property type="match status" value="1"/>
</dbReference>
<dbReference type="PROSITE" id="PS50922">
    <property type="entry name" value="TLC"/>
    <property type="match status" value="1"/>
</dbReference>
<name>CERS5_MOUSE</name>
<proteinExistence type="evidence at protein level"/>
<reference key="1">
    <citation type="submission" date="2001-04" db="EMBL/GenBank/DDBJ databases">
        <authorList>
            <person name="Hartmann E."/>
        </authorList>
    </citation>
    <scope>NUCLEOTIDE SEQUENCE [MRNA] (ISOFORM 1)</scope>
</reference>
<reference key="2">
    <citation type="journal article" date="2005" name="Science">
        <title>The transcriptional landscape of the mammalian genome.</title>
        <authorList>
            <person name="Carninci P."/>
            <person name="Kasukawa T."/>
            <person name="Katayama S."/>
            <person name="Gough J."/>
            <person name="Frith M.C."/>
            <person name="Maeda N."/>
            <person name="Oyama R."/>
            <person name="Ravasi T."/>
            <person name="Lenhard B."/>
            <person name="Wells C."/>
            <person name="Kodzius R."/>
            <person name="Shimokawa K."/>
            <person name="Bajic V.B."/>
            <person name="Brenner S.E."/>
            <person name="Batalov S."/>
            <person name="Forrest A.R."/>
            <person name="Zavolan M."/>
            <person name="Davis M.J."/>
            <person name="Wilming L.G."/>
            <person name="Aidinis V."/>
            <person name="Allen J.E."/>
            <person name="Ambesi-Impiombato A."/>
            <person name="Apweiler R."/>
            <person name="Aturaliya R.N."/>
            <person name="Bailey T.L."/>
            <person name="Bansal M."/>
            <person name="Baxter L."/>
            <person name="Beisel K.W."/>
            <person name="Bersano T."/>
            <person name="Bono H."/>
            <person name="Chalk A.M."/>
            <person name="Chiu K.P."/>
            <person name="Choudhary V."/>
            <person name="Christoffels A."/>
            <person name="Clutterbuck D.R."/>
            <person name="Crowe M.L."/>
            <person name="Dalla E."/>
            <person name="Dalrymple B.P."/>
            <person name="de Bono B."/>
            <person name="Della Gatta G."/>
            <person name="di Bernardo D."/>
            <person name="Down T."/>
            <person name="Engstrom P."/>
            <person name="Fagiolini M."/>
            <person name="Faulkner G."/>
            <person name="Fletcher C.F."/>
            <person name="Fukushima T."/>
            <person name="Furuno M."/>
            <person name="Futaki S."/>
            <person name="Gariboldi M."/>
            <person name="Georgii-Hemming P."/>
            <person name="Gingeras T.R."/>
            <person name="Gojobori T."/>
            <person name="Green R.E."/>
            <person name="Gustincich S."/>
            <person name="Harbers M."/>
            <person name="Hayashi Y."/>
            <person name="Hensch T.K."/>
            <person name="Hirokawa N."/>
            <person name="Hill D."/>
            <person name="Huminiecki L."/>
            <person name="Iacono M."/>
            <person name="Ikeo K."/>
            <person name="Iwama A."/>
            <person name="Ishikawa T."/>
            <person name="Jakt M."/>
            <person name="Kanapin A."/>
            <person name="Katoh M."/>
            <person name="Kawasawa Y."/>
            <person name="Kelso J."/>
            <person name="Kitamura H."/>
            <person name="Kitano H."/>
            <person name="Kollias G."/>
            <person name="Krishnan S.P."/>
            <person name="Kruger A."/>
            <person name="Kummerfeld S.K."/>
            <person name="Kurochkin I.V."/>
            <person name="Lareau L.F."/>
            <person name="Lazarevic D."/>
            <person name="Lipovich L."/>
            <person name="Liu J."/>
            <person name="Liuni S."/>
            <person name="McWilliam S."/>
            <person name="Madan Babu M."/>
            <person name="Madera M."/>
            <person name="Marchionni L."/>
            <person name="Matsuda H."/>
            <person name="Matsuzawa S."/>
            <person name="Miki H."/>
            <person name="Mignone F."/>
            <person name="Miyake S."/>
            <person name="Morris K."/>
            <person name="Mottagui-Tabar S."/>
            <person name="Mulder N."/>
            <person name="Nakano N."/>
            <person name="Nakauchi H."/>
            <person name="Ng P."/>
            <person name="Nilsson R."/>
            <person name="Nishiguchi S."/>
            <person name="Nishikawa S."/>
            <person name="Nori F."/>
            <person name="Ohara O."/>
            <person name="Okazaki Y."/>
            <person name="Orlando V."/>
            <person name="Pang K.C."/>
            <person name="Pavan W.J."/>
            <person name="Pavesi G."/>
            <person name="Pesole G."/>
            <person name="Petrovsky N."/>
            <person name="Piazza S."/>
            <person name="Reed J."/>
            <person name="Reid J.F."/>
            <person name="Ring B.Z."/>
            <person name="Ringwald M."/>
            <person name="Rost B."/>
            <person name="Ruan Y."/>
            <person name="Salzberg S.L."/>
            <person name="Sandelin A."/>
            <person name="Schneider C."/>
            <person name="Schoenbach C."/>
            <person name="Sekiguchi K."/>
            <person name="Semple C.A."/>
            <person name="Seno S."/>
            <person name="Sessa L."/>
            <person name="Sheng Y."/>
            <person name="Shibata Y."/>
            <person name="Shimada H."/>
            <person name="Shimada K."/>
            <person name="Silva D."/>
            <person name="Sinclair B."/>
            <person name="Sperling S."/>
            <person name="Stupka E."/>
            <person name="Sugiura K."/>
            <person name="Sultana R."/>
            <person name="Takenaka Y."/>
            <person name="Taki K."/>
            <person name="Tammoja K."/>
            <person name="Tan S.L."/>
            <person name="Tang S."/>
            <person name="Taylor M.S."/>
            <person name="Tegner J."/>
            <person name="Teichmann S.A."/>
            <person name="Ueda H.R."/>
            <person name="van Nimwegen E."/>
            <person name="Verardo R."/>
            <person name="Wei C.L."/>
            <person name="Yagi K."/>
            <person name="Yamanishi H."/>
            <person name="Zabarovsky E."/>
            <person name="Zhu S."/>
            <person name="Zimmer A."/>
            <person name="Hide W."/>
            <person name="Bult C."/>
            <person name="Grimmond S.M."/>
            <person name="Teasdale R.D."/>
            <person name="Liu E.T."/>
            <person name="Brusic V."/>
            <person name="Quackenbush J."/>
            <person name="Wahlestedt C."/>
            <person name="Mattick J.S."/>
            <person name="Hume D.A."/>
            <person name="Kai C."/>
            <person name="Sasaki D."/>
            <person name="Tomaru Y."/>
            <person name="Fukuda S."/>
            <person name="Kanamori-Katayama M."/>
            <person name="Suzuki M."/>
            <person name="Aoki J."/>
            <person name="Arakawa T."/>
            <person name="Iida J."/>
            <person name="Imamura K."/>
            <person name="Itoh M."/>
            <person name="Kato T."/>
            <person name="Kawaji H."/>
            <person name="Kawagashira N."/>
            <person name="Kawashima T."/>
            <person name="Kojima M."/>
            <person name="Kondo S."/>
            <person name="Konno H."/>
            <person name="Nakano K."/>
            <person name="Ninomiya N."/>
            <person name="Nishio T."/>
            <person name="Okada M."/>
            <person name="Plessy C."/>
            <person name="Shibata K."/>
            <person name="Shiraki T."/>
            <person name="Suzuki S."/>
            <person name="Tagami M."/>
            <person name="Waki K."/>
            <person name="Watahiki A."/>
            <person name="Okamura-Oho Y."/>
            <person name="Suzuki H."/>
            <person name="Kawai J."/>
            <person name="Hayashizaki Y."/>
        </authorList>
    </citation>
    <scope>NUCLEOTIDE SEQUENCE [LARGE SCALE MRNA] (ISOFORM 1)</scope>
    <source>
        <strain>C57BL/6J</strain>
        <tissue>Tongue</tissue>
    </source>
</reference>
<reference key="3">
    <citation type="journal article" date="2004" name="Genome Res.">
        <title>The status, quality, and expansion of the NIH full-length cDNA project: the Mammalian Gene Collection (MGC).</title>
        <authorList>
            <consortium name="The MGC Project Team"/>
        </authorList>
    </citation>
    <scope>NUCLEOTIDE SEQUENCE [LARGE SCALE MRNA] (ISOFORMS 1 AND 2)</scope>
    <source>
        <strain>C57BL/6J</strain>
        <tissue>Brain</tissue>
        <tissue>Mammary tumor</tissue>
    </source>
</reference>
<reference key="4">
    <citation type="journal article" date="2003" name="J. Biol. Chem.">
        <title>Two mammalian longevity assurance gene (LAG1) family members, trh1 and trh4, regulate dihydroceramide synthesis using different fatty acyl-CoA donors.</title>
        <authorList>
            <person name="Riebeling C."/>
            <person name="Allegood J.C."/>
            <person name="Wang E."/>
            <person name="Merrill A.H. Jr."/>
            <person name="Futerman A.H."/>
        </authorList>
    </citation>
    <scope>FUNCTION</scope>
    <scope>CATALYTIC ACTIVITY</scope>
    <scope>PATHWAY</scope>
    <scope>TISSUE SPECIFICITY</scope>
    <scope>SUBCELLULAR LOCATION</scope>
</reference>
<reference key="5">
    <citation type="journal article" date="2005" name="Biochem. J.">
        <title>Mammalian Lass6 and its related family members regulate synthesis of specific ceramides.</title>
        <authorList>
            <person name="Mizutani Y."/>
            <person name="Kihara A."/>
            <person name="Igarashi Y."/>
        </authorList>
    </citation>
    <scope>FUNCTION</scope>
    <scope>CATALYTIC ACTIVITY</scope>
    <scope>PATHWAY</scope>
    <scope>GLYCOSYLATION AT ASN-26</scope>
    <scope>TISSUE SPECIFICITY</scope>
</reference>
<reference key="6">
    <citation type="journal article" date="2005" name="J. Biol. Chem.">
        <title>LASS5 is a bona fide dihydroceramide synthase that selectively utilizes palmitoyl-CoA as acyl donor.</title>
        <authorList>
            <person name="Lahiri S."/>
            <person name="Futerman A.H."/>
        </authorList>
    </citation>
    <scope>FUNCTION</scope>
    <scope>CATALYTIC ACTIVITY</scope>
    <scope>PATHWAY</scope>
    <scope>ACTIVITY REGULATION</scope>
</reference>
<reference key="7">
    <citation type="journal article" date="2005" name="J. Lipid Res.">
        <title>LASS5 is the predominant ceramide synthase isoform involved in de novo sphingolipid synthesis in lung epithelia.</title>
        <authorList>
            <person name="Xu Z."/>
            <person name="Zhou J."/>
            <person name="McCoy D.M."/>
            <person name="Mallampalli R.K."/>
        </authorList>
    </citation>
    <scope>FUNCTION</scope>
    <scope>CATALYTIC ACTIVITY</scope>
    <scope>TISSUE SPECIFICITY</scope>
    <scope>DEVELOPMENTAL STAGE</scope>
</reference>
<reference key="8">
    <citation type="journal article" date="2010" name="Cell">
        <title>A tissue-specific atlas of mouse protein phosphorylation and expression.</title>
        <authorList>
            <person name="Huttlin E.L."/>
            <person name="Jedrychowski M.P."/>
            <person name="Elias J.E."/>
            <person name="Goswami T."/>
            <person name="Rad R."/>
            <person name="Beausoleil S.A."/>
            <person name="Villen J."/>
            <person name="Haas W."/>
            <person name="Sowa M.E."/>
            <person name="Gygi S.P."/>
        </authorList>
    </citation>
    <scope>IDENTIFICATION BY MASS SPECTROMETRY [LARGE SCALE ANALYSIS]</scope>
    <source>
        <tissue>Testis</tissue>
    </source>
</reference>
<reference key="9">
    <citation type="journal article" date="2007" name="FEBS Lett.">
        <title>Kinetic characterization of mammalian ceramide synthases: determination of K(m) values towards sphinganine.</title>
        <authorList>
            <person name="Lahiri S."/>
            <person name="Lee H."/>
            <person name="Mesicek J."/>
            <person name="Fuks Z."/>
            <person name="Haimovitz-Friedman A."/>
            <person name="Kolesnick R.N."/>
            <person name="Futerman A.H."/>
        </authorList>
    </citation>
    <scope>FUNCTION</scope>
    <scope>CATALYTIC ACTIVITY</scope>
    <scope>BIOPHYSICOCHEMICAL PROPERTIES</scope>
    <scope>PATHWAY</scope>
</reference>
<reference key="10">
    <citation type="journal article" date="2007" name="J. Biol. Chem.">
        <title>A new functional motif in Hox domain-containing ceramide synthases: identification of a novel region flanking the Hox and TLC domains essential for activity.</title>
        <authorList>
            <person name="Mesika A."/>
            <person name="Ben-Dor S."/>
            <person name="Laviad E.L."/>
            <person name="Futerman A.H."/>
        </authorList>
    </citation>
    <scope>FUNCTION</scope>
    <scope>CATALYTIC ACTIVITY</scope>
    <scope>PATHWAY</scope>
    <scope>BIOPHYSICOCHEMICAL PROPERTIES</scope>
    <scope>MUTAGENESIS OF 129-ARG--LYS-140; LYS-134; 136-PRO--LYS-140 AND LYS-140</scope>
</reference>
<reference key="11">
    <citation type="journal article" date="2016" name="J. Biol. Chem.">
        <title>Ceramide Synthase 5 is essential to maintain C16:0-ceramide pools and contributes to the development of diet-induced obesity.</title>
        <authorList>
            <person name="Gosejacob D."/>
            <person name="Jaeger P.S."/>
            <person name="Vom Dorp K."/>
            <person name="Frejno M."/>
            <person name="Carstensen A.C."/>
            <person name="Koehnke M."/>
            <person name="Degen J."/>
            <person name="Doermann P."/>
            <person name="Hoch M."/>
        </authorList>
    </citation>
    <scope>FUNCTION</scope>
    <scope>DISRUPTION PHENOTYPE</scope>
</reference>
<reference key="12">
    <citation type="journal article" date="2019" name="Cell">
        <title>CerS6-derived sphingolipids interact with Mff and promote mitochondrial fragmentation in obesity.</title>
        <authorList>
            <person name="Hammerschmidt P."/>
            <person name="Ostkotte D."/>
            <person name="Nolte H."/>
            <person name="Gerl M.J."/>
            <person name="Jais A."/>
            <person name="Brunner H.L."/>
            <person name="Sprenger H.G."/>
            <person name="Awazawa M."/>
            <person name="Nicholls H.T."/>
            <person name="Turpin-Nolan S.M."/>
            <person name="Langer T."/>
            <person name="Krueger M."/>
            <person name="Bruegger B."/>
            <person name="Bruening J.C."/>
        </authorList>
    </citation>
    <scope>CAUTION</scope>
</reference>
<reference key="13">
    <citation type="journal article" date="2024" name="Nat. Metab.">
        <title>PAQR4 regulates adipocyte function and systemic metabolic health by mediating ceramide levels.</title>
        <authorList>
            <person name="Zhu Q."/>
            <person name="Chen S."/>
            <person name="Funcke J.B."/>
            <person name="Straub L.G."/>
            <person name="Lin Q."/>
            <person name="Zhao S."/>
            <person name="Joung C."/>
            <person name="Zhang Z."/>
            <person name="Kim D.S."/>
            <person name="Li N."/>
            <person name="Gliniak C.M."/>
            <person name="Lee C."/>
            <person name="Cebrian-Serrano A."/>
            <person name="Pedersen L."/>
            <person name="Halberg N."/>
            <person name="Gordillo R."/>
            <person name="Kusminski C.M."/>
            <person name="Scherer P.E."/>
        </authorList>
    </citation>
    <scope>FUNCTION</scope>
    <scope>CATALYTIC ACTIVITY</scope>
    <scope>INTERACTION WITH PAQR4</scope>
</reference>
<reference key="14">
    <citation type="submission" date="2005-11" db="PDB data bank">
        <title>Solution structure of RSGI RUH-034, a homeodomain from mouse cDNA.</title>
        <authorList>
            <consortium name="RIKEN structural genomics initiative (RSGI)"/>
        </authorList>
    </citation>
    <scope>STRUCTURE BY NMR OF 77-135</scope>
</reference>
<accession>Q9D6K9</accession>
<accession>Q3UL17</accession>
<accession>Q80YB2</accession>
<accession>Q8BPH6</accession>
<accession>Q921T8</accession>
<accession>Q924Z3</accession>
<sequence length="414" mass="48167">MATAAAETLGLLWGWLWSESFWLPQNVSWADLEGPGDGYGYPRAQHVLSVFPLAVCIFSVRMLFERFIAKPCALRVGIKDSPVNKVEPNDTLEKVFVSVTKYPDEKRLKGLSKQLDWSVRKIQCWFRHRRNQDKPPTLTKFCESMWRFTYYLCIFCYGIRFLWSMPWFWDTRQCWYNYPYQPLSRELYYYYITQLAFYWSLMFSQFIDVKRKDFLMMFIHHMIGIMLTTFSYVNNMVRVGALIFCLHDFADPLLEAAKMANYARRERLCTTLFVIFGAAFIVSRLAIFPLWILNTTLFESWEIIGPYPSWWLFNALLLILQVLHAIWSYLIVQTASKALSRGKVSKDDRSDVESSSEEEDETTHKNNLSGSSSSNGANCMNGYMGGSHLAEEQGTCKATGNLHFRASPHLHSCD</sequence>
<comment type="function">
    <text evidence="5 6 7 8 9 10 11 13">Ceramide synthase that catalyzes the transfer of the acyl chain from acyl-CoA to a sphingoid base, with high selectivity toward palmitoyl-CoA (hexadecanoyl-CoA; C16:0-CoA) (PubMed:12912983, PubMed:15823095, PubMed:16100120, PubMed:17609214, PubMed:17977534, PubMed:26853464, PubMed:38961186). Can use other acyl donors, but with less efficiency (PubMed:15823095). N-acylates sphinganine and sphingosine bases to form dihydroceramides and ceramides in de novo synthesis and salvage pathways, respectively (PubMed:12912983, PubMed:15772421, PubMed:15823095, PubMed:17977534). Plays a role in de novo ceramide synthesis and surfactant homeostasis in pulmonary epithelia (PubMed:15772421).</text>
</comment>
<comment type="catalytic activity">
    <reaction evidence="5 6 7 10">
        <text>a sphingoid base + hexadecanoyl-CoA = an N-hexadecanoyl-sphingoid base + CoA + H(+)</text>
        <dbReference type="Rhea" id="RHEA:61472"/>
        <dbReference type="ChEBI" id="CHEBI:15378"/>
        <dbReference type="ChEBI" id="CHEBI:57287"/>
        <dbReference type="ChEBI" id="CHEBI:57379"/>
        <dbReference type="ChEBI" id="CHEBI:84410"/>
        <dbReference type="ChEBI" id="CHEBI:144703"/>
        <dbReference type="EC" id="2.3.1.291"/>
    </reaction>
    <physiologicalReaction direction="left-to-right" evidence="5 6 7 10">
        <dbReference type="Rhea" id="RHEA:61473"/>
    </physiologicalReaction>
</comment>
<comment type="catalytic activity">
    <reaction evidence="5 7 10">
        <text>sphinganine + hexadecanoyl-CoA = N-hexadecanoylsphinganine + CoA + H(+)</text>
        <dbReference type="Rhea" id="RHEA:36539"/>
        <dbReference type="ChEBI" id="CHEBI:15378"/>
        <dbReference type="ChEBI" id="CHEBI:57287"/>
        <dbReference type="ChEBI" id="CHEBI:57379"/>
        <dbReference type="ChEBI" id="CHEBI:57817"/>
        <dbReference type="ChEBI" id="CHEBI:67042"/>
    </reaction>
    <physiologicalReaction direction="left-to-right" evidence="5 7 10">
        <dbReference type="Rhea" id="RHEA:36540"/>
    </physiologicalReaction>
</comment>
<comment type="catalytic activity">
    <reaction evidence="1">
        <text>hexadecasphinganine + hexadecanoyl-CoA = N-hexadecanoylhexadecasphinganine + CoA + H(+)</text>
        <dbReference type="Rhea" id="RHEA:43040"/>
        <dbReference type="ChEBI" id="CHEBI:15378"/>
        <dbReference type="ChEBI" id="CHEBI:57287"/>
        <dbReference type="ChEBI" id="CHEBI:57379"/>
        <dbReference type="ChEBI" id="CHEBI:71009"/>
        <dbReference type="ChEBI" id="CHEBI:82810"/>
    </reaction>
    <physiologicalReaction direction="left-to-right" evidence="1">
        <dbReference type="Rhea" id="RHEA:43041"/>
    </physiologicalReaction>
</comment>
<comment type="catalytic activity">
    <reaction evidence="5 13">
        <text>sphing-4-enine + hexadecanoyl-CoA = N-hexadecanoylsphing-4-enine + CoA + H(+)</text>
        <dbReference type="Rhea" id="RHEA:36687"/>
        <dbReference type="ChEBI" id="CHEBI:15378"/>
        <dbReference type="ChEBI" id="CHEBI:57287"/>
        <dbReference type="ChEBI" id="CHEBI:57379"/>
        <dbReference type="ChEBI" id="CHEBI:57756"/>
        <dbReference type="ChEBI" id="CHEBI:72959"/>
    </reaction>
    <physiologicalReaction direction="left-to-right" evidence="5">
        <dbReference type="Rhea" id="RHEA:36688"/>
    </physiologicalReaction>
</comment>
<comment type="catalytic activity">
    <reaction evidence="1">
        <text>2-hydroxyhexadecanoyl-CoA + sphinganine = N-(2-hydroxyhexadecanoyl)-sphinganine + CoA + H(+)</text>
        <dbReference type="Rhea" id="RHEA:36647"/>
        <dbReference type="ChEBI" id="CHEBI:15378"/>
        <dbReference type="ChEBI" id="CHEBI:57287"/>
        <dbReference type="ChEBI" id="CHEBI:57817"/>
        <dbReference type="ChEBI" id="CHEBI:67043"/>
        <dbReference type="ChEBI" id="CHEBI:74115"/>
    </reaction>
    <physiologicalReaction direction="left-to-right" evidence="1">
        <dbReference type="Rhea" id="RHEA:36648"/>
    </physiologicalReaction>
</comment>
<comment type="catalytic activity">
    <reaction evidence="7">
        <text>sphinganine + tetradecanoyl-CoA = N-(tetradecanoyl)-sphinganine + CoA + H(+)</text>
        <dbReference type="Rhea" id="RHEA:36571"/>
        <dbReference type="ChEBI" id="CHEBI:15378"/>
        <dbReference type="ChEBI" id="CHEBI:57287"/>
        <dbReference type="ChEBI" id="CHEBI:57385"/>
        <dbReference type="ChEBI" id="CHEBI:57817"/>
        <dbReference type="ChEBI" id="CHEBI:67045"/>
    </reaction>
    <physiologicalReaction direction="left-to-right" evidence="7">
        <dbReference type="Rhea" id="RHEA:36572"/>
    </physiologicalReaction>
</comment>
<comment type="catalytic activity">
    <reaction evidence="5 7">
        <text>sphinganine + octadecanoyl-CoA = N-(octadecanoyl)-sphinganine + CoA + H(+)</text>
        <dbReference type="Rhea" id="RHEA:36547"/>
        <dbReference type="ChEBI" id="CHEBI:15378"/>
        <dbReference type="ChEBI" id="CHEBI:57287"/>
        <dbReference type="ChEBI" id="CHEBI:57394"/>
        <dbReference type="ChEBI" id="CHEBI:57817"/>
        <dbReference type="ChEBI" id="CHEBI:67033"/>
    </reaction>
    <physiologicalReaction direction="left-to-right" evidence="5 7">
        <dbReference type="Rhea" id="RHEA:36548"/>
    </physiologicalReaction>
</comment>
<comment type="catalytic activity">
    <reaction evidence="7">
        <text>sphinganine + (9Z)-octadecenoyl-CoA = N-(9Z-octadecenoyl)-sphinganine + CoA + H(+)</text>
        <dbReference type="Rhea" id="RHEA:36575"/>
        <dbReference type="ChEBI" id="CHEBI:15378"/>
        <dbReference type="ChEBI" id="CHEBI:57287"/>
        <dbReference type="ChEBI" id="CHEBI:57387"/>
        <dbReference type="ChEBI" id="CHEBI:57817"/>
        <dbReference type="ChEBI" id="CHEBI:74100"/>
    </reaction>
    <physiologicalReaction direction="left-to-right" evidence="7">
        <dbReference type="Rhea" id="RHEA:36576"/>
    </physiologicalReaction>
</comment>
<comment type="catalytic activity">
    <reaction evidence="5">
        <text>a fatty acyl-CoA + sphing-4-enine = an N-acylsphing-4-enine + CoA + H(+)</text>
        <dbReference type="Rhea" id="RHEA:23768"/>
        <dbReference type="ChEBI" id="CHEBI:15378"/>
        <dbReference type="ChEBI" id="CHEBI:52639"/>
        <dbReference type="ChEBI" id="CHEBI:57287"/>
        <dbReference type="ChEBI" id="CHEBI:57756"/>
        <dbReference type="ChEBI" id="CHEBI:77636"/>
        <dbReference type="EC" id="2.3.1.24"/>
    </reaction>
    <physiologicalReaction direction="left-to-right" evidence="5">
        <dbReference type="Rhea" id="RHEA:23769"/>
    </physiologicalReaction>
</comment>
<comment type="catalytic activity">
    <reaction evidence="19">
        <text>tetracosenoyl-CoA + sphing-4-enine = N-(tetracosenoyl)-sphing-4-enine + CoA + H(+)</text>
        <dbReference type="Rhea" id="RHEA:37123"/>
        <dbReference type="ChEBI" id="CHEBI:15378"/>
        <dbReference type="ChEBI" id="CHEBI:57287"/>
        <dbReference type="ChEBI" id="CHEBI:57756"/>
        <dbReference type="ChEBI" id="CHEBI:74146"/>
        <dbReference type="ChEBI" id="CHEBI:74457"/>
    </reaction>
    <physiologicalReaction direction="left-to-right" evidence="19">
        <dbReference type="Rhea" id="RHEA:37124"/>
    </physiologicalReaction>
</comment>
<comment type="activity regulation">
    <text evidence="8">Inhibited by fumonisin B1.</text>
</comment>
<comment type="biophysicochemical properties">
    <kinetics>
        <KM evidence="10">1.8 uM for sphinganine</KM>
        <KM evidence="9">3.6 uM for sphinganine</KM>
        <Vmax evidence="9">215.0 pmol/min/mg enzyme with sphinganine as substrate</Vmax>
    </kinetics>
</comment>
<comment type="pathway">
    <text evidence="5 7 8 9 10">Lipid metabolism; sphingolipid metabolism.</text>
</comment>
<comment type="subunit">
    <text evidence="13">Interacts with PAQR4; the interaction regulates the stability and activity of CERS5 and is inhibited in presence of ceramides.</text>
</comment>
<comment type="subcellular location">
    <subcellularLocation>
        <location evidence="5">Endoplasmic reticulum membrane</location>
        <topology evidence="2">Multi-pass membrane protein</topology>
    </subcellularLocation>
</comment>
<comment type="alternative products">
    <event type="alternative splicing"/>
    <isoform>
        <id>Q9D6K9-1</id>
        <name>1</name>
        <sequence type="displayed"/>
    </isoform>
    <isoform>
        <id>Q9D6K9-2</id>
        <name>2</name>
        <sequence type="described" ref="VSP_011192 VSP_011193"/>
    </isoform>
</comment>
<comment type="tissue specificity">
    <text evidence="5 6 7">Ubiquitously expressed, with highest levels in testis and kidney (PubMed:12912983, PubMed:15823095). Expressed in pulmonary epithelia (PubMed:15772421).</text>
</comment>
<comment type="developmental stage">
    <text evidence="6">Expressed in lungs of 15 days old fetuses followed by a modest peak at day 17, thereafter decreasing in adult lungs.</text>
</comment>
<comment type="domain">
    <text evidence="1">The last loop motif confers selectivity toward palmitoyl-CoA (hexadecanoyl-CoA; C16:0-CoA) as acyl donor.</text>
</comment>
<comment type="PTM">
    <text evidence="1">Phosphorylated at the C-terminus by CK2.</text>
</comment>
<comment type="disruption phenotype">
    <text evidence="11">Mice are viable and show no apparent morphological alterations in normal conditions (PubMed:26853464). Decreased palmitoyl (C16:0) ceramide pools (PubMed:26853464).</text>
</comment>
<comment type="caution">
    <text evidence="11 12">According to a report, deletion of Cers5 protects from obesity: knockout mice are associated with reduced weight gain and improved systemic health after high fat diet challenge (PubMed:26853464). This result was however not confirmed by another study, which did not observe any protection from diet-induced obesity in knockout mice (PubMed:31150623). Effects observed in the first study might be indirect and caused by a large deletion that affects neighboring genes and/or deletes non-coding RNAs (PubMed:26853464, PubMed:31150623).</text>
</comment>
<comment type="caution">
    <text evidence="2 5">Some prediction bioinformatics tools predict the presence of a homeobox domain (By similarity). However, the domain is degenerate and residues that are important for DNA-binding are absent (By similarity). Moreover, the protein localizes in the endoplasmic reticulum and not in the nucleus, strongly suggesting that it does not constitute a canonical homeobox domain (PubMed:12912983).</text>
</comment>
<feature type="chain" id="PRO_0000185515" description="Ceramide synthase 5">
    <location>
        <begin position="1"/>
        <end position="414"/>
    </location>
</feature>
<feature type="topological domain" description="Lumenal" evidence="18">
    <location>
        <begin position="1"/>
        <end position="43"/>
    </location>
</feature>
<feature type="transmembrane region" description="Helical" evidence="2">
    <location>
        <begin position="44"/>
        <end position="64"/>
    </location>
</feature>
<feature type="transmembrane region" description="Helical" evidence="2">
    <location>
        <begin position="148"/>
        <end position="168"/>
    </location>
</feature>
<feature type="transmembrane region" description="Helical" evidence="2">
    <location>
        <begin position="187"/>
        <end position="207"/>
    </location>
</feature>
<feature type="transmembrane region" description="Helical" evidence="2">
    <location>
        <begin position="214"/>
        <end position="234"/>
    </location>
</feature>
<feature type="transmembrane region" description="Helical" evidence="2">
    <location>
        <begin position="272"/>
        <end position="292"/>
    </location>
</feature>
<feature type="transmembrane region" description="Helical" evidence="2">
    <location>
        <begin position="312"/>
        <end position="332"/>
    </location>
</feature>
<feature type="topological domain" description="Cytoplasmic" evidence="1">
    <location>
        <begin position="333"/>
        <end position="414"/>
    </location>
</feature>
<feature type="domain" description="TLC" evidence="3">
    <location>
        <begin position="139"/>
        <end position="340"/>
    </location>
</feature>
<feature type="region of interest" description="Homeobox-like" evidence="17">
    <location>
        <begin position="75"/>
        <end position="136"/>
    </location>
</feature>
<feature type="region of interest" description="Disordered" evidence="4">
    <location>
        <begin position="347"/>
        <end position="373"/>
    </location>
</feature>
<feature type="short sequence motif" description="Last loop motif" evidence="1">
    <location>
        <begin position="299"/>
        <end position="309"/>
    </location>
</feature>
<feature type="glycosylation site" description="N-linked (GlcNAc...) asparagine" evidence="7">
    <location>
        <position position="26"/>
    </location>
</feature>
<feature type="splice variant" id="VSP_011192" description="In isoform 2." evidence="15">
    <original>SKDDRSDVESSSEEEDETTHKNNLSGSSSSNGANCMNGYMGGS</original>
    <variation>LSQEGLDPGSVPSALSHLLPLFSAWWQLDSSILCMCLRMTAVM</variation>
    <location>
        <begin position="345"/>
        <end position="387"/>
    </location>
</feature>
<feature type="splice variant" id="VSP_011193" description="In isoform 2." evidence="15">
    <location>
        <begin position="388"/>
        <end position="414"/>
    </location>
</feature>
<feature type="mutagenesis site" description="Abolished ceramide synthase activity." evidence="9">
    <location>
        <begin position="129"/>
        <end position="140"/>
    </location>
</feature>
<feature type="mutagenesis site" description="Abolished ceramide synthase activity." evidence="9">
    <original>K</original>
    <variation>A</variation>
    <location>
        <position position="134"/>
    </location>
</feature>
<feature type="mutagenesis site" description="Does not affect ceramide synthase activity." evidence="9">
    <original>K</original>
    <variation>R</variation>
    <location>
        <position position="134"/>
    </location>
</feature>
<feature type="mutagenesis site" description="Abolished ceramide synthase activity." evidence="9">
    <location>
        <begin position="136"/>
        <end position="140"/>
    </location>
</feature>
<feature type="mutagenesis site" description="Abolished ceramide synthase activity." evidence="9">
    <original>K</original>
    <variation>A</variation>
    <location>
        <position position="140"/>
    </location>
</feature>
<feature type="mutagenesis site" description="Does not affect ceramide synthase activity." evidence="9">
    <original>K</original>
    <variation>R</variation>
    <location>
        <position position="140"/>
    </location>
</feature>
<feature type="sequence conflict" description="In Ref. 1; AAK40301." evidence="17" ref="1">
    <original>P</original>
    <variation>A</variation>
    <location>
        <position position="82"/>
    </location>
</feature>
<feature type="sequence conflict" description="In Ref. 2; BAC35894." evidence="17" ref="2">
    <original>W</original>
    <variation>R</variation>
    <location>
        <position position="310"/>
    </location>
</feature>
<feature type="helix" evidence="21">
    <location>
        <begin position="91"/>
        <end position="98"/>
    </location>
</feature>
<feature type="helix" evidence="21">
    <location>
        <begin position="105"/>
        <end position="114"/>
    </location>
</feature>
<feature type="helix" evidence="21">
    <location>
        <begin position="119"/>
        <end position="133"/>
    </location>
</feature>
<protein>
    <recommendedName>
        <fullName evidence="17">Ceramide synthase 5</fullName>
        <shortName evidence="17">CerS5</shortName>
    </recommendedName>
    <alternativeName>
        <fullName evidence="16">LAG1 longevity assurance homolog 5</fullName>
    </alternativeName>
    <alternativeName>
        <fullName evidence="17">Sphingoid base N-palmitoyltransferase CERS5</fullName>
        <ecNumber evidence="5 6 7 10">2.3.1.291</ecNumber>
    </alternativeName>
    <alternativeName>
        <fullName evidence="17">Sphingosine N-acyltransferase CERS5</fullName>
        <ecNumber evidence="5">2.3.1.24</ecNumber>
    </alternativeName>
    <alternativeName>
        <fullName evidence="14">Translocating chain-associating membrane protein homolog 4</fullName>
        <shortName evidence="14">TRAM homolog 4</shortName>
    </alternativeName>
</protein>
<evidence type="ECO:0000250" key="1">
    <source>
        <dbReference type="UniProtKB" id="Q8N5B7"/>
    </source>
</evidence>
<evidence type="ECO:0000255" key="2"/>
<evidence type="ECO:0000255" key="3">
    <source>
        <dbReference type="PROSITE-ProRule" id="PRU00205"/>
    </source>
</evidence>
<evidence type="ECO:0000256" key="4">
    <source>
        <dbReference type="SAM" id="MobiDB-lite"/>
    </source>
</evidence>
<evidence type="ECO:0000269" key="5">
    <source>
    </source>
</evidence>
<evidence type="ECO:0000269" key="6">
    <source>
    </source>
</evidence>
<evidence type="ECO:0000269" key="7">
    <source>
    </source>
</evidence>
<evidence type="ECO:0000269" key="8">
    <source>
    </source>
</evidence>
<evidence type="ECO:0000269" key="9">
    <source>
    </source>
</evidence>
<evidence type="ECO:0000269" key="10">
    <source>
    </source>
</evidence>
<evidence type="ECO:0000269" key="11">
    <source>
    </source>
</evidence>
<evidence type="ECO:0000269" key="12">
    <source>
    </source>
</evidence>
<evidence type="ECO:0000269" key="13">
    <source>
    </source>
</evidence>
<evidence type="ECO:0000303" key="14">
    <source>
    </source>
</evidence>
<evidence type="ECO:0000303" key="15">
    <source>
    </source>
</evidence>
<evidence type="ECO:0000303" key="16">
    <source>
    </source>
</evidence>
<evidence type="ECO:0000305" key="17"/>
<evidence type="ECO:0000305" key="18">
    <source>
    </source>
</evidence>
<evidence type="ECO:0000305" key="19">
    <source>
    </source>
</evidence>
<evidence type="ECO:0000312" key="20">
    <source>
        <dbReference type="MGI" id="MGI:1919199"/>
    </source>
</evidence>
<evidence type="ECO:0007829" key="21">
    <source>
        <dbReference type="PDB" id="2CQX"/>
    </source>
</evidence>